<feature type="chain" id="PRO_0000159597" description="Neuromodulin">
    <location>
        <begin position="1"/>
        <end position="227"/>
    </location>
</feature>
<feature type="domain" description="IQ" evidence="4">
    <location>
        <begin position="31"/>
        <end position="60"/>
    </location>
</feature>
<feature type="region of interest" description="Disordered" evidence="5">
    <location>
        <begin position="1"/>
        <end position="227"/>
    </location>
</feature>
<feature type="compositionally biased region" description="Basic and acidic residues" evidence="5">
    <location>
        <begin position="9"/>
        <end position="32"/>
    </location>
</feature>
<feature type="compositionally biased region" description="Basic and acidic residues" evidence="5">
    <location>
        <begin position="54"/>
        <end position="84"/>
    </location>
</feature>
<feature type="compositionally biased region" description="Low complexity" evidence="5">
    <location>
        <begin position="85"/>
        <end position="97"/>
    </location>
</feature>
<feature type="compositionally biased region" description="Basic and acidic residues" evidence="5">
    <location>
        <begin position="98"/>
        <end position="127"/>
    </location>
</feature>
<feature type="compositionally biased region" description="Low complexity" evidence="5">
    <location>
        <begin position="128"/>
        <end position="139"/>
    </location>
</feature>
<feature type="compositionally biased region" description="Basic and acidic residues" evidence="5">
    <location>
        <begin position="146"/>
        <end position="158"/>
    </location>
</feature>
<feature type="compositionally biased region" description="Low complexity" evidence="5">
    <location>
        <begin position="159"/>
        <end position="193"/>
    </location>
</feature>
<feature type="compositionally biased region" description="Basic and acidic residues" evidence="5">
    <location>
        <begin position="202"/>
        <end position="215"/>
    </location>
</feature>
<feature type="compositionally biased region" description="Acidic residues" evidence="5">
    <location>
        <begin position="216"/>
        <end position="227"/>
    </location>
</feature>
<feature type="modified residue" description="Phosphoserine; by PHK" evidence="1 11">
    <location>
        <position position="41"/>
    </location>
</feature>
<feature type="modified residue" description="Phosphoserine" evidence="13">
    <location>
        <position position="86"/>
    </location>
</feature>
<feature type="modified residue" description="Phosphoserine" evidence="13">
    <location>
        <position position="96"/>
    </location>
</feature>
<feature type="modified residue" description="Phosphothreonine" evidence="13">
    <location>
        <position position="138"/>
    </location>
</feature>
<feature type="modified residue" description="Phosphoserine" evidence="13">
    <location>
        <position position="142"/>
    </location>
</feature>
<feature type="modified residue" description="Phosphoserine" evidence="13">
    <location>
        <position position="144"/>
    </location>
</feature>
<feature type="modified residue" description="Phosphoserine" evidence="13">
    <location>
        <position position="145"/>
    </location>
</feature>
<feature type="modified residue" description="Phosphothreonine" evidence="13">
    <location>
        <position position="172"/>
    </location>
</feature>
<feature type="modified residue" description="Phosphoserine; by CK2" evidence="1">
    <location>
        <position position="192"/>
    </location>
</feature>
<feature type="modified residue" description="Phosphoserine; by CK2" evidence="1">
    <location>
        <position position="193"/>
    </location>
</feature>
<feature type="lipid moiety-binding region" description="S-palmitoyl cysteine" evidence="12">
    <location>
        <position position="3"/>
    </location>
</feature>
<feature type="lipid moiety-binding region" description="S-palmitoyl cysteine" evidence="12">
    <location>
        <position position="4"/>
    </location>
</feature>
<feature type="mutagenesis site" description="Loss of palmitoylation; when associated with S-4." evidence="9">
    <original>C</original>
    <variation>S</variation>
    <location>
        <position position="3"/>
    </location>
</feature>
<feature type="mutagenesis site" description="Loss of palmitoylation; when associated with S-3." evidence="9">
    <original>C</original>
    <variation>S</variation>
    <location>
        <position position="4"/>
    </location>
</feature>
<feature type="helix" evidence="14">
    <location>
        <begin position="35"/>
        <end position="51"/>
    </location>
</feature>
<protein>
    <recommendedName>
        <fullName>Neuromodulin</fullName>
    </recommendedName>
    <alternativeName>
        <fullName>Axonal membrane protein GAP-43</fullName>
    </alternativeName>
    <alternativeName>
        <fullName>Calmodulin-binding protein P-57</fullName>
    </alternativeName>
    <alternativeName>
        <fullName>Growth-associated protein 43</fullName>
    </alternativeName>
</protein>
<sequence>MLCCMRRTKQVEKNDEDQKIEQDGVKPEDKAHKAATKIQASFRGHITRKKLKGEKKGDAPAAEAEAKEKDDAPVADGVEKKEGDGSATTDAAPATSPKAEEPSKAGDAPSEEKKGEGDAAPSEEKAGSAETESAAKATTDNSPSSKAEDGPAKEEPKQADVPAAVTDAAATTPAAEDAATKAAQPPTETAESSQAEEEKDAVDEAKPKESARQDEGKEDPEADQEHA</sequence>
<gene>
    <name type="primary">Gap43</name>
    <name type="synonym">Basp2</name>
</gene>
<dbReference type="EMBL" id="J02809">
    <property type="protein sequence ID" value="AAA37377.1"/>
    <property type="molecule type" value="mRNA"/>
</dbReference>
<dbReference type="EMBL" id="BC028288">
    <property type="protein sequence ID" value="AAH28288.1"/>
    <property type="molecule type" value="mRNA"/>
</dbReference>
<dbReference type="EMBL" id="BC080758">
    <property type="protein sequence ID" value="AAH80758.1"/>
    <property type="molecule type" value="mRNA"/>
</dbReference>
<dbReference type="CCDS" id="CCDS28177.1"/>
<dbReference type="PIR" id="A29800">
    <property type="entry name" value="A29800"/>
</dbReference>
<dbReference type="RefSeq" id="NP_032109.1">
    <property type="nucleotide sequence ID" value="NM_008083.2"/>
</dbReference>
<dbReference type="PDB" id="4E53">
    <property type="method" value="X-ray"/>
    <property type="resolution" value="2.69 A"/>
    <property type="chains" value="A/B=34-57"/>
</dbReference>
<dbReference type="PDBsum" id="4E53"/>
<dbReference type="SMR" id="P06837"/>
<dbReference type="BioGRID" id="199828">
    <property type="interactions" value="11"/>
</dbReference>
<dbReference type="CORUM" id="P06837"/>
<dbReference type="FunCoup" id="P06837">
    <property type="interactions" value="135"/>
</dbReference>
<dbReference type="IntAct" id="P06837">
    <property type="interactions" value="3"/>
</dbReference>
<dbReference type="MINT" id="P06837"/>
<dbReference type="STRING" id="10090.ENSMUSP00000099881"/>
<dbReference type="GlyGen" id="P06837">
    <property type="glycosylation" value="4 sites, 1 O-linked glycan (2 sites)"/>
</dbReference>
<dbReference type="iPTMnet" id="P06837"/>
<dbReference type="PhosphoSitePlus" id="P06837"/>
<dbReference type="SwissPalm" id="P06837"/>
<dbReference type="PaxDb" id="10090-ENSMUSP00000099881"/>
<dbReference type="PeptideAtlas" id="P06837"/>
<dbReference type="ProteomicsDB" id="252953"/>
<dbReference type="Antibodypedia" id="2805">
    <property type="antibodies" value="892 antibodies from 42 providers"/>
</dbReference>
<dbReference type="DNASU" id="14432"/>
<dbReference type="Ensembl" id="ENSMUST00000102817.5">
    <property type="protein sequence ID" value="ENSMUSP00000099881.5"/>
    <property type="gene ID" value="ENSMUSG00000047261.10"/>
</dbReference>
<dbReference type="GeneID" id="14432"/>
<dbReference type="KEGG" id="mmu:14432"/>
<dbReference type="UCSC" id="uc007zfv.1">
    <property type="organism name" value="mouse"/>
</dbReference>
<dbReference type="AGR" id="MGI:95639"/>
<dbReference type="CTD" id="2596"/>
<dbReference type="MGI" id="MGI:95639">
    <property type="gene designation" value="Gap43"/>
</dbReference>
<dbReference type="VEuPathDB" id="HostDB:ENSMUSG00000047261"/>
<dbReference type="eggNOG" id="ENOG502RXWF">
    <property type="taxonomic scope" value="Eukaryota"/>
</dbReference>
<dbReference type="GeneTree" id="ENSGT00730000111265"/>
<dbReference type="HOGENOM" id="CLU_102989_0_0_1"/>
<dbReference type="InParanoid" id="P06837"/>
<dbReference type="OMA" id="TNQAKTP"/>
<dbReference type="OrthoDB" id="9397439at2759"/>
<dbReference type="PhylomeDB" id="P06837"/>
<dbReference type="TreeFam" id="TF333213"/>
<dbReference type="Reactome" id="R-MMU-373760">
    <property type="pathway name" value="L1CAM interactions"/>
</dbReference>
<dbReference type="BioGRID-ORCS" id="14432">
    <property type="hits" value="1 hit in 79 CRISPR screens"/>
</dbReference>
<dbReference type="CD-CODE" id="CE726F99">
    <property type="entry name" value="Postsynaptic density"/>
</dbReference>
<dbReference type="ChiTaRS" id="Gap43">
    <property type="organism name" value="mouse"/>
</dbReference>
<dbReference type="EvolutionaryTrace" id="P06837"/>
<dbReference type="PRO" id="PR:P06837"/>
<dbReference type="Proteomes" id="UP000000589">
    <property type="component" value="Chromosome 16"/>
</dbReference>
<dbReference type="RNAct" id="P06837">
    <property type="molecule type" value="protein"/>
</dbReference>
<dbReference type="Bgee" id="ENSMUSG00000047261">
    <property type="expression patterns" value="Expressed in embryonic brain and 229 other cell types or tissues"/>
</dbReference>
<dbReference type="GO" id="GO:0030424">
    <property type="term" value="C:axon"/>
    <property type="evidence" value="ECO:0000314"/>
    <property type="project" value="MGI"/>
</dbReference>
<dbReference type="GO" id="GO:0071944">
    <property type="term" value="C:cell periphery"/>
    <property type="evidence" value="ECO:0000314"/>
    <property type="project" value="MGI"/>
</dbReference>
<dbReference type="GO" id="GO:0005737">
    <property type="term" value="C:cytoplasm"/>
    <property type="evidence" value="ECO:0000314"/>
    <property type="project" value="MGI"/>
</dbReference>
<dbReference type="GO" id="GO:0030425">
    <property type="term" value="C:dendrite"/>
    <property type="evidence" value="ECO:0007669"/>
    <property type="project" value="UniProtKB-SubCell"/>
</dbReference>
<dbReference type="GO" id="GO:0031527">
    <property type="term" value="C:filopodium membrane"/>
    <property type="evidence" value="ECO:0007669"/>
    <property type="project" value="UniProtKB-SubCell"/>
</dbReference>
<dbReference type="GO" id="GO:0098982">
    <property type="term" value="C:GABA-ergic synapse"/>
    <property type="evidence" value="ECO:0007669"/>
    <property type="project" value="Ensembl"/>
</dbReference>
<dbReference type="GO" id="GO:0032584">
    <property type="term" value="C:growth cone membrane"/>
    <property type="evidence" value="ECO:0007669"/>
    <property type="project" value="UniProtKB-SubCell"/>
</dbReference>
<dbReference type="GO" id="GO:0043204">
    <property type="term" value="C:perikaryon"/>
    <property type="evidence" value="ECO:0007669"/>
    <property type="project" value="UniProtKB-SubCell"/>
</dbReference>
<dbReference type="GO" id="GO:0005886">
    <property type="term" value="C:plasma membrane"/>
    <property type="evidence" value="ECO:0000314"/>
    <property type="project" value="MGI"/>
</dbReference>
<dbReference type="GO" id="GO:0014069">
    <property type="term" value="C:postsynaptic density"/>
    <property type="evidence" value="ECO:0000314"/>
    <property type="project" value="MGI"/>
</dbReference>
<dbReference type="GO" id="GO:0098793">
    <property type="term" value="C:presynapse"/>
    <property type="evidence" value="ECO:0007669"/>
    <property type="project" value="Ensembl"/>
</dbReference>
<dbReference type="GO" id="GO:0005516">
    <property type="term" value="F:calmodulin binding"/>
    <property type="evidence" value="ECO:0007669"/>
    <property type="project" value="UniProtKB-KW"/>
</dbReference>
<dbReference type="GO" id="GO:0035727">
    <property type="term" value="F:lysophosphatidic acid binding"/>
    <property type="evidence" value="ECO:0007669"/>
    <property type="project" value="Ensembl"/>
</dbReference>
<dbReference type="GO" id="GO:1901981">
    <property type="term" value="F:phosphatidylinositol phosphate binding"/>
    <property type="evidence" value="ECO:0007669"/>
    <property type="project" value="Ensembl"/>
</dbReference>
<dbReference type="GO" id="GO:0001786">
    <property type="term" value="F:phosphatidylserine binding"/>
    <property type="evidence" value="ECO:0007669"/>
    <property type="project" value="Ensembl"/>
</dbReference>
<dbReference type="GO" id="GO:0048708">
    <property type="term" value="P:astrocyte differentiation"/>
    <property type="evidence" value="ECO:0000315"/>
    <property type="project" value="MGI"/>
</dbReference>
<dbReference type="GO" id="GO:0016198">
    <property type="term" value="P:axon choice point recognition"/>
    <property type="evidence" value="ECO:0000315"/>
    <property type="project" value="MGI"/>
</dbReference>
<dbReference type="GO" id="GO:0007411">
    <property type="term" value="P:axon guidance"/>
    <property type="evidence" value="ECO:0000315"/>
    <property type="project" value="MGI"/>
</dbReference>
<dbReference type="GO" id="GO:0045165">
    <property type="term" value="P:cell fate commitment"/>
    <property type="evidence" value="ECO:0000315"/>
    <property type="project" value="MGI"/>
</dbReference>
<dbReference type="GO" id="GO:0060019">
    <property type="term" value="P:radial glial cell differentiation"/>
    <property type="evidence" value="ECO:0000315"/>
    <property type="project" value="MGI"/>
</dbReference>
<dbReference type="GO" id="GO:0051489">
    <property type="term" value="P:regulation of filopodium assembly"/>
    <property type="evidence" value="ECO:0007669"/>
    <property type="project" value="Ensembl"/>
</dbReference>
<dbReference type="GO" id="GO:0040008">
    <property type="term" value="P:regulation of growth"/>
    <property type="evidence" value="ECO:0007669"/>
    <property type="project" value="InterPro"/>
</dbReference>
<dbReference type="GO" id="GO:0099150">
    <property type="term" value="P:regulation of postsynaptic specialization assembly"/>
    <property type="evidence" value="ECO:0007669"/>
    <property type="project" value="Ensembl"/>
</dbReference>
<dbReference type="GO" id="GO:0010996">
    <property type="term" value="P:response to auditory stimulus"/>
    <property type="evidence" value="ECO:0007669"/>
    <property type="project" value="Ensembl"/>
</dbReference>
<dbReference type="GO" id="GO:0042246">
    <property type="term" value="P:tissue regeneration"/>
    <property type="evidence" value="ECO:0007669"/>
    <property type="project" value="Ensembl"/>
</dbReference>
<dbReference type="CDD" id="cd23767">
    <property type="entry name" value="IQCD"/>
    <property type="match status" value="1"/>
</dbReference>
<dbReference type="DisProt" id="DP02342"/>
<dbReference type="FunFam" id="1.20.5.190:FF:000075">
    <property type="entry name" value="Neuromodulin"/>
    <property type="match status" value="1"/>
</dbReference>
<dbReference type="Gene3D" id="1.20.5.190">
    <property type="match status" value="1"/>
</dbReference>
<dbReference type="InterPro" id="IPR000048">
    <property type="entry name" value="IQ_motif_EF-hand-BS"/>
</dbReference>
<dbReference type="InterPro" id="IPR001422">
    <property type="entry name" value="Neuromodulin"/>
</dbReference>
<dbReference type="InterPro" id="IPR017454">
    <property type="entry name" value="Neuromodulin_C"/>
</dbReference>
<dbReference type="InterPro" id="IPR018947">
    <property type="entry name" value="Neuromodulin_gap-junction_N"/>
</dbReference>
<dbReference type="InterPro" id="IPR033137">
    <property type="entry name" value="Neuromodulin_P_site"/>
</dbReference>
<dbReference type="InterPro" id="IPR018243">
    <property type="entry name" value="Neuromodulin_palmitoyl_site"/>
</dbReference>
<dbReference type="PANTHER" id="PTHR10699">
    <property type="entry name" value="NEUROMODULIN"/>
    <property type="match status" value="1"/>
</dbReference>
<dbReference type="PANTHER" id="PTHR10699:SF15">
    <property type="entry name" value="NEUROMODULIN"/>
    <property type="match status" value="1"/>
</dbReference>
<dbReference type="Pfam" id="PF00612">
    <property type="entry name" value="IQ"/>
    <property type="match status" value="1"/>
</dbReference>
<dbReference type="Pfam" id="PF06614">
    <property type="entry name" value="Neuromodulin"/>
    <property type="match status" value="1"/>
</dbReference>
<dbReference type="Pfam" id="PF10580">
    <property type="entry name" value="Neuromodulin_N"/>
    <property type="match status" value="1"/>
</dbReference>
<dbReference type="PRINTS" id="PR00215">
    <property type="entry name" value="NEUROMODULIN"/>
</dbReference>
<dbReference type="SMART" id="SM00015">
    <property type="entry name" value="IQ"/>
    <property type="match status" value="1"/>
</dbReference>
<dbReference type="PROSITE" id="PS50096">
    <property type="entry name" value="IQ"/>
    <property type="match status" value="1"/>
</dbReference>
<dbReference type="PROSITE" id="PS00412">
    <property type="entry name" value="NEUROMODULIN_1"/>
    <property type="match status" value="1"/>
</dbReference>
<dbReference type="PROSITE" id="PS00413">
    <property type="entry name" value="NEUROMODULIN_2"/>
    <property type="match status" value="1"/>
</dbReference>
<evidence type="ECO:0000250" key="1">
    <source>
        <dbReference type="UniProtKB" id="P06836"/>
    </source>
</evidence>
<evidence type="ECO:0000250" key="2">
    <source>
        <dbReference type="UniProtKB" id="P07936"/>
    </source>
</evidence>
<evidence type="ECO:0000250" key="3">
    <source>
        <dbReference type="UniProtKB" id="P17677"/>
    </source>
</evidence>
<evidence type="ECO:0000255" key="4">
    <source>
        <dbReference type="PROSITE-ProRule" id="PRU00116"/>
    </source>
</evidence>
<evidence type="ECO:0000256" key="5">
    <source>
        <dbReference type="SAM" id="MobiDB-lite"/>
    </source>
</evidence>
<evidence type="ECO:0000269" key="6">
    <source>
    </source>
</evidence>
<evidence type="ECO:0000269" key="7">
    <source>
    </source>
</evidence>
<evidence type="ECO:0000269" key="8">
    <source>
    </source>
</evidence>
<evidence type="ECO:0000269" key="9">
    <source>
    </source>
</evidence>
<evidence type="ECO:0000269" key="10">
    <source>
    </source>
</evidence>
<evidence type="ECO:0000305" key="11"/>
<evidence type="ECO:0000305" key="12">
    <source>
    </source>
</evidence>
<evidence type="ECO:0007744" key="13">
    <source>
    </source>
</evidence>
<evidence type="ECO:0007829" key="14">
    <source>
        <dbReference type="PDB" id="4E53"/>
    </source>
</evidence>
<proteinExistence type="evidence at protein level"/>
<name>NEUM_MOUSE</name>
<accession>P06837</accession>
<keyword id="KW-0002">3D-structure</keyword>
<keyword id="KW-0112">Calmodulin-binding</keyword>
<keyword id="KW-1003">Cell membrane</keyword>
<keyword id="KW-0966">Cell projection</keyword>
<keyword id="KW-0963">Cytoplasm</keyword>
<keyword id="KW-0217">Developmental protein</keyword>
<keyword id="KW-0221">Differentiation</keyword>
<keyword id="KW-0903">Direct protein sequencing</keyword>
<keyword id="KW-0341">Growth regulation</keyword>
<keyword id="KW-0449">Lipoprotein</keyword>
<keyword id="KW-0472">Membrane</keyword>
<keyword id="KW-0524">Neurogenesis</keyword>
<keyword id="KW-0564">Palmitate</keyword>
<keyword id="KW-0597">Phosphoprotein</keyword>
<keyword id="KW-1185">Reference proteome</keyword>
<keyword id="KW-0770">Synapse</keyword>
<organism>
    <name type="scientific">Mus musculus</name>
    <name type="common">Mouse</name>
    <dbReference type="NCBI Taxonomy" id="10090"/>
    <lineage>
        <taxon>Eukaryota</taxon>
        <taxon>Metazoa</taxon>
        <taxon>Chordata</taxon>
        <taxon>Craniata</taxon>
        <taxon>Vertebrata</taxon>
        <taxon>Euteleostomi</taxon>
        <taxon>Mammalia</taxon>
        <taxon>Eutheria</taxon>
        <taxon>Euarchontoglires</taxon>
        <taxon>Glires</taxon>
        <taxon>Rodentia</taxon>
        <taxon>Myomorpha</taxon>
        <taxon>Muroidea</taxon>
        <taxon>Muridae</taxon>
        <taxon>Murinae</taxon>
        <taxon>Mus</taxon>
        <taxon>Mus</taxon>
    </lineage>
</organism>
<reference key="1">
    <citation type="journal article" date="1987" name="J. Biol. Chem.">
        <title>Characterization of murine cDNAs encoding P-57, a neural-specific calmodulin-binding protein.</title>
        <authorList>
            <person name="Cimler B.M."/>
            <person name="Giebelhaus D.H."/>
            <person name="Wakim B.T."/>
            <person name="Storm D.R."/>
            <person name="Moon R.T."/>
        </authorList>
    </citation>
    <scope>NUCLEOTIDE SEQUENCE [MRNA]</scope>
</reference>
<reference key="2">
    <citation type="journal article" date="2004" name="Genome Res.">
        <title>The status, quality, and expansion of the NIH full-length cDNA project: the Mammalian Gene Collection (MGC).</title>
        <authorList>
            <consortium name="The MGC Project Team"/>
        </authorList>
    </citation>
    <scope>NUCLEOTIDE SEQUENCE [LARGE SCALE MRNA]</scope>
    <source>
        <strain>C57BL/6J</strain>
        <tissue>Retina</tissue>
    </source>
</reference>
<reference key="3">
    <citation type="submission" date="2009-01" db="UniProtKB">
        <authorList>
            <person name="Lubec G."/>
            <person name="Sunyer B."/>
            <person name="Chen W.-Q."/>
        </authorList>
    </citation>
    <scope>PROTEIN SEQUENCE OF 84-104</scope>
    <scope>IDENTIFICATION BY MASS SPECTROMETRY</scope>
    <source>
        <strain>OF1</strain>
        <tissue>Hippocampus</tissue>
    </source>
</reference>
<reference key="4">
    <citation type="journal article" date="2001" name="Nat. Cell Biol.">
        <title>N-CAM modulates tumour-cell adhesion to matrix by inducing FGF-receptor signalling.</title>
        <authorList>
            <person name="Cavallaro U."/>
            <person name="Niedermeyer J."/>
            <person name="Fuxa M."/>
            <person name="Christofori G."/>
        </authorList>
    </citation>
    <scope>IDENTIFICATION IN A COMPLEX WITH NCAM1; CDH2; PLCG1; FRS2; SRC; FGFR4 AND CTTN</scope>
</reference>
<reference key="5">
    <citation type="journal article" date="2001" name="Proc. Natl. Acad. Sci. U.S.A.">
        <title>Posttranscriptional regulation of gene expression in learning by the neuronal ELAV-like mRNA-stabilizing proteins.</title>
        <authorList>
            <person name="Quattrone A."/>
            <person name="Pascale A."/>
            <person name="Nogues X."/>
            <person name="Zhao W."/>
            <person name="Gusev P."/>
            <person name="Pacini A."/>
            <person name="Alkon D.L."/>
        </authorList>
    </citation>
    <scope>TISSUE SPECIFICITY</scope>
</reference>
<reference key="6">
    <citation type="journal article" date="2004" name="Mol. Cell. Proteomics">
        <title>Phosphoproteomic analysis of the developing mouse brain.</title>
        <authorList>
            <person name="Ballif B.A."/>
            <person name="Villen J."/>
            <person name="Beausoleil S.A."/>
            <person name="Schwartz D."/>
            <person name="Gygi S.P."/>
        </authorList>
    </citation>
    <scope>IDENTIFICATION BY MASS SPECTROMETRY [LARGE SCALE ANALYSIS]</scope>
    <source>
        <tissue>Embryonic brain</tissue>
    </source>
</reference>
<reference key="7">
    <citation type="journal article" date="2006" name="Mol. Cell. Proteomics">
        <title>Comprehensive identification of phosphorylation sites in postsynaptic density preparations.</title>
        <authorList>
            <person name="Trinidad J.C."/>
            <person name="Specht C.G."/>
            <person name="Thalhammer A."/>
            <person name="Schoepfer R."/>
            <person name="Burlingame A.L."/>
        </authorList>
    </citation>
    <scope>IDENTIFICATION BY MASS SPECTROMETRY [LARGE SCALE ANALYSIS]</scope>
    <source>
        <tissue>Brain</tissue>
    </source>
</reference>
<reference key="8">
    <citation type="journal article" date="2008" name="Hippocampus">
        <title>Alterations in mossy fiber physiology and GAP-43 expression and function in transgenic mice overexpressing HuD.</title>
        <authorList>
            <person name="Tanner D.C."/>
            <person name="Qiu S."/>
            <person name="Bolognani F."/>
            <person name="Partridge L.D."/>
            <person name="Weeber E.J."/>
            <person name="Perrone-Bizzozero N.I."/>
        </authorList>
    </citation>
    <scope>INTERACTION WITH CALMODULIN</scope>
    <scope>TISSUE SPECIFICITY</scope>
    <scope>PHOSPHORYLATION</scope>
</reference>
<reference key="9">
    <citation type="journal article" date="2010" name="Cell">
        <title>A tissue-specific atlas of mouse protein phosphorylation and expression.</title>
        <authorList>
            <person name="Huttlin E.L."/>
            <person name="Jedrychowski M.P."/>
            <person name="Elias J.E."/>
            <person name="Goswami T."/>
            <person name="Rad R."/>
            <person name="Beausoleil S.A."/>
            <person name="Villen J."/>
            <person name="Haas W."/>
            <person name="Sowa M.E."/>
            <person name="Gygi S.P."/>
        </authorList>
    </citation>
    <scope>PHOSPHORYLATION [LARGE SCALE ANALYSIS] AT SER-86; SER-96; THR-138; SER-142; SER-144; SER-145 AND THR-172</scope>
    <scope>IDENTIFICATION BY MASS SPECTROMETRY [LARGE SCALE ANALYSIS]</scope>
    <source>
        <tissue>Brain</tissue>
        <tissue>Brown adipose tissue</tissue>
        <tissue>Heart</tissue>
        <tissue>Lung</tissue>
    </source>
</reference>
<reference key="10">
    <citation type="journal article" date="2016" name="J. Biol. Chem.">
        <title>Dissociation of Golgi-associated DHHC-type Zinc Finger Protein (GODZ)- and Sertoli Cell Gene with a Zinc Finger Domain-beta (SERZ-beta)-mediated Palmitoylation by Loss of Function Analyses in Knock-out Mice.</title>
        <authorList>
            <person name="Kilpatrick C.L."/>
            <person name="Murakami S."/>
            <person name="Feng M."/>
            <person name="Wu X."/>
            <person name="Lal R."/>
            <person name="Chen G."/>
            <person name="Du K."/>
            <person name="Luscher B."/>
        </authorList>
    </citation>
    <scope>PALMITOYLATION AT CYS-3 AND CYS-4</scope>
    <scope>MUTAGENESIS OF CYS-3 AND CYS-4</scope>
</reference>
<reference key="11">
    <citation type="journal article" date="2017" name="Brain Res.">
        <title>HuD-mediated distinct BDNF regulatory pathways promote regeneration after nerve injury.</title>
        <authorList>
            <person name="Sanna M.D."/>
            <person name="Ghelardini C."/>
            <person name="Galeotti N."/>
        </authorList>
    </citation>
    <scope>TISSUE SPECIFICITY</scope>
    <scope>INDUCTION BY NERVE INJURY</scope>
</reference>
<comment type="function">
    <text evidence="3">This protein is associated with nerve growth. It is a major component of the motile 'growth cones' that form the tips of elongating axons. Plays a role in axonal and dendritic filopodia induction.</text>
</comment>
<comment type="subunit">
    <text evidence="1 6 8">Identified in a complex containing FGFR4, NCAM1, CDH2, PLCG1, FRS2, SRC, SHC1, GAP43 and CTTN (PubMed:11433297). Interacts (via IQ domain) with calmodulin (PubMed:18493953). Binds calmodulin with a greater affinity in the absence of Ca(2+) than in its presence (By similarity).</text>
</comment>
<comment type="subcellular location">
    <subcellularLocation>
        <location evidence="3">Cell membrane</location>
        <topology evidence="3">Peripheral membrane protein</topology>
        <orientation evidence="3">Cytoplasmic side</orientation>
    </subcellularLocation>
    <subcellularLocation>
        <location evidence="3">Cell projection</location>
        <location evidence="3">Growth cone membrane</location>
        <topology evidence="3">Peripheral membrane protein</topology>
        <orientation evidence="3">Cytoplasmic side</orientation>
    </subcellularLocation>
    <subcellularLocation>
        <location evidence="3">Synapse</location>
    </subcellularLocation>
    <subcellularLocation>
        <location evidence="3">Cell projection</location>
        <location evidence="3">Filopodium membrane</location>
        <topology evidence="3">Peripheral membrane protein</topology>
    </subcellularLocation>
    <subcellularLocation>
        <location evidence="2">Perikaryon</location>
    </subcellularLocation>
    <subcellularLocation>
        <location evidence="2">Cell projection</location>
        <location evidence="2">Dendrite</location>
    </subcellularLocation>
    <subcellularLocation>
        <location evidence="2">Cell projection</location>
        <location evidence="2">Axon</location>
    </subcellularLocation>
    <subcellularLocation>
        <location evidence="2">Cytoplasm</location>
    </subcellularLocation>
    <text evidence="3">Cytoplasmic surface of growth cone and synaptic plasma membranes.</text>
</comment>
<comment type="tissue specificity">
    <text evidence="7 8 10">Expressed in the hippocampus (at protein level) (PubMed:11573004, PubMed:18493953). Expressed in the dorsal root ganglion and the spinal cord (at protein level) (PubMed:28111162).</text>
</comment>
<comment type="induction">
    <text evidence="7 10">Up-regulated after memory training in radial arm maze experiments (PubMed:11573004). Up-regulated after sciatic nerve injury (PubMed:28111162).</text>
</comment>
<comment type="PTM">
    <text evidence="2 8">Phosphorylated (PubMed:18493953). Phosphorylation of this protein by a protein kinase C is specifically correlated with certain forms of synaptic plasticity (By similarity).</text>
</comment>
<comment type="PTM">
    <text evidence="3 9">Palmitoylated by ZDHHC3 (PubMed:27875292). Palmitoylation is regulated by ARF6 and is essential for plasma membrane association and axonal and dendritic filopodia induction. Deacylated by LYPLA2 (By similarity).</text>
</comment>
<comment type="similarity">
    <text evidence="11">Belongs to the neuromodulin family.</text>
</comment>